<protein>
    <recommendedName>
        <fullName evidence="1">Phosphate acyltransferase</fullName>
        <ecNumber evidence="1">2.3.1.274</ecNumber>
    </recommendedName>
    <alternativeName>
        <fullName evidence="1">Acyl-ACP phosphotransacylase</fullName>
    </alternativeName>
    <alternativeName>
        <fullName evidence="1">Acyl-[acyl-carrier-protein]--phosphate acyltransferase</fullName>
    </alternativeName>
    <alternativeName>
        <fullName evidence="1">Phosphate-acyl-ACP acyltransferase</fullName>
    </alternativeName>
</protein>
<comment type="function">
    <text evidence="1">Catalyzes the reversible formation of acyl-phosphate (acyl-PO(4)) from acyl-[acyl-carrier-protein] (acyl-ACP). This enzyme utilizes acyl-ACP as fatty acyl donor, but not acyl-CoA.</text>
</comment>
<comment type="catalytic activity">
    <reaction evidence="1">
        <text>a fatty acyl-[ACP] + phosphate = an acyl phosphate + holo-[ACP]</text>
        <dbReference type="Rhea" id="RHEA:42292"/>
        <dbReference type="Rhea" id="RHEA-COMP:9685"/>
        <dbReference type="Rhea" id="RHEA-COMP:14125"/>
        <dbReference type="ChEBI" id="CHEBI:43474"/>
        <dbReference type="ChEBI" id="CHEBI:59918"/>
        <dbReference type="ChEBI" id="CHEBI:64479"/>
        <dbReference type="ChEBI" id="CHEBI:138651"/>
        <dbReference type="EC" id="2.3.1.274"/>
    </reaction>
</comment>
<comment type="pathway">
    <text evidence="1">Lipid metabolism; phospholipid metabolism.</text>
</comment>
<comment type="subunit">
    <text evidence="1">Homodimer. Probably interacts with PlsY.</text>
</comment>
<comment type="subcellular location">
    <subcellularLocation>
        <location evidence="1">Cytoplasm</location>
    </subcellularLocation>
    <text evidence="1">Associated with the membrane possibly through PlsY.</text>
</comment>
<comment type="similarity">
    <text evidence="1">Belongs to the PlsX family.</text>
</comment>
<comment type="sequence caution" evidence="2">
    <conflict type="erroneous initiation">
        <sequence resource="EMBL-CDS" id="CAD85556"/>
    </conflict>
</comment>
<organism>
    <name type="scientific">Nitrosomonas europaea (strain ATCC 19718 / CIP 103999 / KCTC 2705 / NBRC 14298)</name>
    <dbReference type="NCBI Taxonomy" id="228410"/>
    <lineage>
        <taxon>Bacteria</taxon>
        <taxon>Pseudomonadati</taxon>
        <taxon>Pseudomonadota</taxon>
        <taxon>Betaproteobacteria</taxon>
        <taxon>Nitrosomonadales</taxon>
        <taxon>Nitrosomonadaceae</taxon>
        <taxon>Nitrosomonas</taxon>
    </lineage>
</organism>
<sequence>MNITVAIDCMGGDHGPHITVPSAVEYMHHDCETNIILVGKPEVISRELDALKVSPGSRLRLHPANEVVGMDEHPAVALRNKKDSSMRVALNLIKSGEAQACISAGNTGALLATSRFVLKTIPGIDRPALAVILPTISGHTYVLDLGANVNCTAEHLLQFGIMGATLVSSVENKPNPSIGLLNVGEEDIKGNDVVKRAAELFRSSGLNFYGNIEGDDIYRGTTNVVVCDGFVGNVALKTSEGLAQMLASYLREEFRRSLFSRLAGLVALPVINAFRRRVDHRQYNGASLLGLRGVVIKSHGSADSYAFRCAIRRAVEEVRGGTLRNIVEHIETLRNNIEQNIAQPVSIE</sequence>
<feature type="chain" id="PRO_0000189913" description="Phosphate acyltransferase">
    <location>
        <begin position="1"/>
        <end position="348"/>
    </location>
</feature>
<reference key="1">
    <citation type="journal article" date="2003" name="J. Bacteriol.">
        <title>Complete genome sequence of the ammonia-oxidizing bacterium and obligate chemolithoautotroph Nitrosomonas europaea.</title>
        <authorList>
            <person name="Chain P."/>
            <person name="Lamerdin J.E."/>
            <person name="Larimer F.W."/>
            <person name="Regala W."/>
            <person name="Lao V."/>
            <person name="Land M.L."/>
            <person name="Hauser L."/>
            <person name="Hooper A.B."/>
            <person name="Klotz M.G."/>
            <person name="Norton J."/>
            <person name="Sayavedra-Soto L.A."/>
            <person name="Arciero D.M."/>
            <person name="Hommes N.G."/>
            <person name="Whittaker M.M."/>
            <person name="Arp D.J."/>
        </authorList>
    </citation>
    <scope>NUCLEOTIDE SEQUENCE [LARGE SCALE GENOMIC DNA]</scope>
    <source>
        <strain>ATCC 19718 / CIP 103999 / KCTC 2705 / NBRC 14298</strain>
    </source>
</reference>
<dbReference type="EC" id="2.3.1.274" evidence="1"/>
<dbReference type="EMBL" id="AL954747">
    <property type="protein sequence ID" value="CAD85556.1"/>
    <property type="status" value="ALT_INIT"/>
    <property type="molecule type" value="Genomic_DNA"/>
</dbReference>
<dbReference type="RefSeq" id="WP_011112202.1">
    <property type="nucleotide sequence ID" value="NC_004757.1"/>
</dbReference>
<dbReference type="SMR" id="Q82U61"/>
<dbReference type="STRING" id="228410.NE1645"/>
<dbReference type="GeneID" id="87104809"/>
<dbReference type="KEGG" id="neu:NE1645"/>
<dbReference type="eggNOG" id="COG0416">
    <property type="taxonomic scope" value="Bacteria"/>
</dbReference>
<dbReference type="HOGENOM" id="CLU_039379_1_0_4"/>
<dbReference type="OrthoDB" id="9806408at2"/>
<dbReference type="PhylomeDB" id="Q82U61"/>
<dbReference type="UniPathway" id="UPA00085"/>
<dbReference type="Proteomes" id="UP000001416">
    <property type="component" value="Chromosome"/>
</dbReference>
<dbReference type="GO" id="GO:0005737">
    <property type="term" value="C:cytoplasm"/>
    <property type="evidence" value="ECO:0007669"/>
    <property type="project" value="UniProtKB-SubCell"/>
</dbReference>
<dbReference type="GO" id="GO:0043811">
    <property type="term" value="F:phosphate:acyl-[acyl carrier protein] acyltransferase activity"/>
    <property type="evidence" value="ECO:0007669"/>
    <property type="project" value="UniProtKB-UniRule"/>
</dbReference>
<dbReference type="GO" id="GO:0006633">
    <property type="term" value="P:fatty acid biosynthetic process"/>
    <property type="evidence" value="ECO:0007669"/>
    <property type="project" value="UniProtKB-UniRule"/>
</dbReference>
<dbReference type="GO" id="GO:0008654">
    <property type="term" value="P:phospholipid biosynthetic process"/>
    <property type="evidence" value="ECO:0007669"/>
    <property type="project" value="UniProtKB-KW"/>
</dbReference>
<dbReference type="Gene3D" id="3.40.718.10">
    <property type="entry name" value="Isopropylmalate Dehydrogenase"/>
    <property type="match status" value="1"/>
</dbReference>
<dbReference type="HAMAP" id="MF_00019">
    <property type="entry name" value="PlsX"/>
    <property type="match status" value="1"/>
</dbReference>
<dbReference type="InterPro" id="IPR003664">
    <property type="entry name" value="FA_synthesis"/>
</dbReference>
<dbReference type="InterPro" id="IPR012281">
    <property type="entry name" value="Phospholipid_synth_PlsX-like"/>
</dbReference>
<dbReference type="NCBIfam" id="TIGR00182">
    <property type="entry name" value="plsX"/>
    <property type="match status" value="1"/>
</dbReference>
<dbReference type="PANTHER" id="PTHR30100">
    <property type="entry name" value="FATTY ACID/PHOSPHOLIPID SYNTHESIS PROTEIN PLSX"/>
    <property type="match status" value="1"/>
</dbReference>
<dbReference type="PANTHER" id="PTHR30100:SF1">
    <property type="entry name" value="PHOSPHATE ACYLTRANSFERASE"/>
    <property type="match status" value="1"/>
</dbReference>
<dbReference type="Pfam" id="PF02504">
    <property type="entry name" value="FA_synthesis"/>
    <property type="match status" value="1"/>
</dbReference>
<dbReference type="PIRSF" id="PIRSF002465">
    <property type="entry name" value="Phsphlp_syn_PlsX"/>
    <property type="match status" value="1"/>
</dbReference>
<dbReference type="SUPFAM" id="SSF53659">
    <property type="entry name" value="Isocitrate/Isopropylmalate dehydrogenase-like"/>
    <property type="match status" value="1"/>
</dbReference>
<name>PLSX_NITEU</name>
<proteinExistence type="inferred from homology"/>
<gene>
    <name evidence="1" type="primary">plsX</name>
    <name type="ordered locus">NE1645</name>
</gene>
<keyword id="KW-0963">Cytoplasm</keyword>
<keyword id="KW-0444">Lipid biosynthesis</keyword>
<keyword id="KW-0443">Lipid metabolism</keyword>
<keyword id="KW-0594">Phospholipid biosynthesis</keyword>
<keyword id="KW-1208">Phospholipid metabolism</keyword>
<keyword id="KW-1185">Reference proteome</keyword>
<keyword id="KW-0808">Transferase</keyword>
<accession>Q82U61</accession>
<evidence type="ECO:0000255" key="1">
    <source>
        <dbReference type="HAMAP-Rule" id="MF_00019"/>
    </source>
</evidence>
<evidence type="ECO:0000305" key="2"/>